<evidence type="ECO:0000255" key="1">
    <source>
        <dbReference type="HAMAP-Rule" id="MF_00904"/>
    </source>
</evidence>
<proteinExistence type="inferred from homology"/>
<accession>D2BRP0</accession>
<organism>
    <name type="scientific">Dickeya zeae (strain Ech586)</name>
    <name type="common">Dickeya dadantii (strain Ech586)</name>
    <dbReference type="NCBI Taxonomy" id="590409"/>
    <lineage>
        <taxon>Bacteria</taxon>
        <taxon>Pseudomonadati</taxon>
        <taxon>Pseudomonadota</taxon>
        <taxon>Gammaproteobacteria</taxon>
        <taxon>Enterobacterales</taxon>
        <taxon>Pectobacteriaceae</taxon>
        <taxon>Dickeya</taxon>
        <taxon>Dickeya parazeae</taxon>
    </lineage>
</organism>
<protein>
    <recommendedName>
        <fullName evidence="1">Modulator protein MzrA</fullName>
    </recommendedName>
</protein>
<gene>
    <name evidence="1" type="primary">mzrA</name>
    <name type="ordered locus">Dd586_0550</name>
</gene>
<reference key="1">
    <citation type="submission" date="2009-12" db="EMBL/GenBank/DDBJ databases">
        <title>Complete sequence of Dickeya dadantii Ech586.</title>
        <authorList>
            <consortium name="US DOE Joint Genome Institute"/>
            <person name="Lucas S."/>
            <person name="Copeland A."/>
            <person name="Lapidus A."/>
            <person name="Glavina del Rio T."/>
            <person name="Tice H."/>
            <person name="Bruce D."/>
            <person name="Goodwin L."/>
            <person name="Pitluck S."/>
            <person name="Munk A.C."/>
            <person name="Brettin T."/>
            <person name="Detter J.C."/>
            <person name="Han C."/>
            <person name="Tapia R."/>
            <person name="Larimer F."/>
            <person name="Land M."/>
            <person name="Hauser L."/>
            <person name="Kyrpides N."/>
            <person name="Mikhailova N."/>
            <person name="Balakrishnan V."/>
            <person name="Glasner J."/>
            <person name="Perna N.T."/>
        </authorList>
    </citation>
    <scope>NUCLEOTIDE SEQUENCE [LARGE SCALE GENOMIC DNA]</scope>
    <source>
        <strain>Ech586</strain>
    </source>
</reference>
<name>MZRA_DICZ5</name>
<feature type="chain" id="PRO_0000413179" description="Modulator protein MzrA">
    <location>
        <begin position="1"/>
        <end position="117"/>
    </location>
</feature>
<feature type="topological domain" description="Cytoplasmic" evidence="1">
    <location>
        <begin position="1"/>
        <end position="9"/>
    </location>
</feature>
<feature type="transmembrane region" description="Helical" evidence="1">
    <location>
        <begin position="10"/>
        <end position="29"/>
    </location>
</feature>
<feature type="topological domain" description="Periplasmic" evidence="1">
    <location>
        <begin position="30"/>
        <end position="117"/>
    </location>
</feature>
<comment type="function">
    <text evidence="1">Modulates the activity of the EnvZ/OmpR two-component regulatory system, probably by directly modulating EnvZ enzymatic activity and increasing stability of phosphorylated OmpR.</text>
</comment>
<comment type="subunit">
    <text evidence="1">Interacts with EnvZ.</text>
</comment>
<comment type="subcellular location">
    <subcellularLocation>
        <location evidence="1">Cell inner membrane</location>
        <topology evidence="1">Single-pass membrane protein</topology>
    </subcellularLocation>
</comment>
<comment type="similarity">
    <text evidence="1">Belongs to the MzrA family.</text>
</comment>
<dbReference type="EMBL" id="CP001836">
    <property type="protein sequence ID" value="ACZ75444.1"/>
    <property type="molecule type" value="Genomic_DNA"/>
</dbReference>
<dbReference type="RefSeq" id="WP_012883295.1">
    <property type="nucleotide sequence ID" value="NC_013592.1"/>
</dbReference>
<dbReference type="SMR" id="D2BRP0"/>
<dbReference type="STRING" id="590409.Dd586_0550"/>
<dbReference type="KEGG" id="ddc:Dd586_0550"/>
<dbReference type="eggNOG" id="ENOG50333DY">
    <property type="taxonomic scope" value="Bacteria"/>
</dbReference>
<dbReference type="HOGENOM" id="CLU_153761_1_0_6"/>
<dbReference type="OrthoDB" id="6414235at2"/>
<dbReference type="Proteomes" id="UP000001446">
    <property type="component" value="Chromosome"/>
</dbReference>
<dbReference type="GO" id="GO:0005886">
    <property type="term" value="C:plasma membrane"/>
    <property type="evidence" value="ECO:0007669"/>
    <property type="project" value="UniProtKB-SubCell"/>
</dbReference>
<dbReference type="GO" id="GO:0019901">
    <property type="term" value="F:protein kinase binding"/>
    <property type="evidence" value="ECO:0007669"/>
    <property type="project" value="UniProtKB-UniRule"/>
</dbReference>
<dbReference type="Gene3D" id="3.30.70.260">
    <property type="match status" value="1"/>
</dbReference>
<dbReference type="HAMAP" id="MF_00904">
    <property type="entry name" value="Modulator_MzrA"/>
    <property type="match status" value="1"/>
</dbReference>
<dbReference type="InterPro" id="IPR026574">
    <property type="entry name" value="Modulator_MzrA"/>
</dbReference>
<dbReference type="InterPro" id="IPR027398">
    <property type="entry name" value="SecD-TM"/>
</dbReference>
<dbReference type="NCBIfam" id="NF007915">
    <property type="entry name" value="PRK10629.1"/>
    <property type="match status" value="1"/>
</dbReference>
<dbReference type="Pfam" id="PF13721">
    <property type="entry name" value="SecD-TM1"/>
    <property type="match status" value="1"/>
</dbReference>
<sequence>MNSPGLRKPTIWRPLLLLFPLLALLLSMSSPRLPDEVMLHITPLHQGMTLPDGFYIYQRLNERGIAIKSITPENNSIIVRLSSPEQSGAAKEILSIALPNTVVIAQRTHGTIRVARS</sequence>
<keyword id="KW-0997">Cell inner membrane</keyword>
<keyword id="KW-1003">Cell membrane</keyword>
<keyword id="KW-0472">Membrane</keyword>
<keyword id="KW-0812">Transmembrane</keyword>
<keyword id="KW-1133">Transmembrane helix</keyword>